<accession>Q5PMY8</accession>
<gene>
    <name evidence="1" type="primary">cmoA</name>
    <name type="ordered locus">SPA0964</name>
</gene>
<dbReference type="EC" id="2.1.3.-" evidence="1"/>
<dbReference type="EMBL" id="CP000026">
    <property type="protein sequence ID" value="AAV76939.1"/>
    <property type="molecule type" value="Genomic_DNA"/>
</dbReference>
<dbReference type="RefSeq" id="WP_000019609.1">
    <property type="nucleotide sequence ID" value="NC_006511.1"/>
</dbReference>
<dbReference type="SMR" id="Q5PMY8"/>
<dbReference type="KEGG" id="spt:SPA0964"/>
<dbReference type="HOGENOM" id="CLU_078475_0_0_6"/>
<dbReference type="Proteomes" id="UP000008185">
    <property type="component" value="Chromosome"/>
</dbReference>
<dbReference type="GO" id="GO:0016743">
    <property type="term" value="F:carboxyl- or carbamoyltransferase activity"/>
    <property type="evidence" value="ECO:0007669"/>
    <property type="project" value="UniProtKB-UniRule"/>
</dbReference>
<dbReference type="GO" id="GO:1904047">
    <property type="term" value="F:S-adenosyl-L-methionine binding"/>
    <property type="evidence" value="ECO:0007669"/>
    <property type="project" value="UniProtKB-UniRule"/>
</dbReference>
<dbReference type="GO" id="GO:0002098">
    <property type="term" value="P:tRNA wobble uridine modification"/>
    <property type="evidence" value="ECO:0007669"/>
    <property type="project" value="InterPro"/>
</dbReference>
<dbReference type="CDD" id="cd02440">
    <property type="entry name" value="AdoMet_MTases"/>
    <property type="match status" value="1"/>
</dbReference>
<dbReference type="FunFam" id="3.40.50.150:FF:000030">
    <property type="entry name" value="Carboxy-S-adenosyl-L-methionine synthase"/>
    <property type="match status" value="1"/>
</dbReference>
<dbReference type="Gene3D" id="3.40.50.150">
    <property type="entry name" value="Vaccinia Virus protein VP39"/>
    <property type="match status" value="1"/>
</dbReference>
<dbReference type="HAMAP" id="MF_01589">
    <property type="entry name" value="Cx_SAM_synthase"/>
    <property type="match status" value="1"/>
</dbReference>
<dbReference type="InterPro" id="IPR005271">
    <property type="entry name" value="CmoA"/>
</dbReference>
<dbReference type="InterPro" id="IPR041698">
    <property type="entry name" value="Methyltransf_25"/>
</dbReference>
<dbReference type="InterPro" id="IPR029063">
    <property type="entry name" value="SAM-dependent_MTases_sf"/>
</dbReference>
<dbReference type="NCBIfam" id="TIGR00740">
    <property type="entry name" value="carboxy-S-adenosyl-L-methionine synthase CmoA"/>
    <property type="match status" value="1"/>
</dbReference>
<dbReference type="NCBIfam" id="NF011995">
    <property type="entry name" value="PRK15451.1"/>
    <property type="match status" value="1"/>
</dbReference>
<dbReference type="PANTHER" id="PTHR43861:SF2">
    <property type="entry name" value="CARBOXY-S-ADENOSYL-L-METHIONINE SYNTHASE"/>
    <property type="match status" value="1"/>
</dbReference>
<dbReference type="PANTHER" id="PTHR43861">
    <property type="entry name" value="TRANS-ACONITATE 2-METHYLTRANSFERASE-RELATED"/>
    <property type="match status" value="1"/>
</dbReference>
<dbReference type="Pfam" id="PF13649">
    <property type="entry name" value="Methyltransf_25"/>
    <property type="match status" value="1"/>
</dbReference>
<dbReference type="PIRSF" id="PIRSF006325">
    <property type="entry name" value="MeTrfase_bac"/>
    <property type="match status" value="1"/>
</dbReference>
<dbReference type="SUPFAM" id="SSF53335">
    <property type="entry name" value="S-adenosyl-L-methionine-dependent methyltransferases"/>
    <property type="match status" value="1"/>
</dbReference>
<organism>
    <name type="scientific">Salmonella paratyphi A (strain ATCC 9150 / SARB42)</name>
    <dbReference type="NCBI Taxonomy" id="295319"/>
    <lineage>
        <taxon>Bacteria</taxon>
        <taxon>Pseudomonadati</taxon>
        <taxon>Pseudomonadota</taxon>
        <taxon>Gammaproteobacteria</taxon>
        <taxon>Enterobacterales</taxon>
        <taxon>Enterobacteriaceae</taxon>
        <taxon>Salmonella</taxon>
    </lineage>
</organism>
<name>CMOA_SALPA</name>
<reference key="1">
    <citation type="journal article" date="2004" name="Nat. Genet.">
        <title>Comparison of genome degradation in Paratyphi A and Typhi, human-restricted serovars of Salmonella enterica that cause typhoid.</title>
        <authorList>
            <person name="McClelland M."/>
            <person name="Sanderson K.E."/>
            <person name="Clifton S.W."/>
            <person name="Latreille P."/>
            <person name="Porwollik S."/>
            <person name="Sabo A."/>
            <person name="Meyer R."/>
            <person name="Bieri T."/>
            <person name="Ozersky P."/>
            <person name="McLellan M."/>
            <person name="Harkins C.R."/>
            <person name="Wang C."/>
            <person name="Nguyen C."/>
            <person name="Berghoff A."/>
            <person name="Elliott G."/>
            <person name="Kohlberg S."/>
            <person name="Strong C."/>
            <person name="Du F."/>
            <person name="Carter J."/>
            <person name="Kremizki C."/>
            <person name="Layman D."/>
            <person name="Leonard S."/>
            <person name="Sun H."/>
            <person name="Fulton L."/>
            <person name="Nash W."/>
            <person name="Miner T."/>
            <person name="Minx P."/>
            <person name="Delehaunty K."/>
            <person name="Fronick C."/>
            <person name="Magrini V."/>
            <person name="Nhan M."/>
            <person name="Warren W."/>
            <person name="Florea L."/>
            <person name="Spieth J."/>
            <person name="Wilson R.K."/>
        </authorList>
    </citation>
    <scope>NUCLEOTIDE SEQUENCE [LARGE SCALE GENOMIC DNA]</scope>
    <source>
        <strain>ATCC 9150 / SARB42</strain>
    </source>
</reference>
<sequence length="247" mass="27848">MSHRDTLFSAPIARLGDWTFDERVAEVFPDMIQRSVPGYSNIISMIGMLAERFVQPNTQVYDLGCSLGAATLSVRRNIRHEHCRIIAVDNSPAMIERCRRHIDAYKAPTPVEVVEGDIRDITIENASMVVLNFTLQFLEPAERQALLDKIYLGLNPGGALVLSEKFSFEDAKVGELLFNMHHDFKRANGYSELEISQKRSMLENVMLTDSVETHKARLRQAGFEHSELWFQCFNFGSLVALKAGVAA</sequence>
<keyword id="KW-0949">S-adenosyl-L-methionine</keyword>
<keyword id="KW-0808">Transferase</keyword>
<comment type="function">
    <text evidence="1">Catalyzes the conversion of S-adenosyl-L-methionine (SAM) to carboxy-S-adenosyl-L-methionine (Cx-SAM).</text>
</comment>
<comment type="catalytic activity">
    <reaction evidence="1">
        <text>prephenate + S-adenosyl-L-methionine = carboxy-S-adenosyl-L-methionine + 3-phenylpyruvate + H2O</text>
        <dbReference type="Rhea" id="RHEA:51692"/>
        <dbReference type="ChEBI" id="CHEBI:15377"/>
        <dbReference type="ChEBI" id="CHEBI:18005"/>
        <dbReference type="ChEBI" id="CHEBI:29934"/>
        <dbReference type="ChEBI" id="CHEBI:59789"/>
        <dbReference type="ChEBI" id="CHEBI:134278"/>
    </reaction>
</comment>
<comment type="subunit">
    <text evidence="1">Homodimer.</text>
</comment>
<comment type="similarity">
    <text evidence="1">Belongs to the class I-like SAM-binding methyltransferase superfamily. Cx-SAM synthase family.</text>
</comment>
<feature type="chain" id="PRO_0000314372" description="Carboxy-S-adenosyl-L-methionine synthase">
    <location>
        <begin position="1"/>
        <end position="247"/>
    </location>
</feature>
<feature type="binding site" evidence="1">
    <location>
        <position position="39"/>
    </location>
    <ligand>
        <name>S-adenosyl-L-methionine</name>
        <dbReference type="ChEBI" id="CHEBI:59789"/>
    </ligand>
</feature>
<feature type="binding site" evidence="1">
    <location>
        <begin position="64"/>
        <end position="66"/>
    </location>
    <ligand>
        <name>S-adenosyl-L-methionine</name>
        <dbReference type="ChEBI" id="CHEBI:59789"/>
    </ligand>
</feature>
<feature type="binding site" evidence="1">
    <location>
        <begin position="89"/>
        <end position="90"/>
    </location>
    <ligand>
        <name>S-adenosyl-L-methionine</name>
        <dbReference type="ChEBI" id="CHEBI:59789"/>
    </ligand>
</feature>
<feature type="binding site" evidence="1">
    <location>
        <begin position="117"/>
        <end position="118"/>
    </location>
    <ligand>
        <name>S-adenosyl-L-methionine</name>
        <dbReference type="ChEBI" id="CHEBI:59789"/>
    </ligand>
</feature>
<feature type="binding site" evidence="1">
    <location>
        <position position="132"/>
    </location>
    <ligand>
        <name>S-adenosyl-L-methionine</name>
        <dbReference type="ChEBI" id="CHEBI:59789"/>
    </ligand>
</feature>
<feature type="binding site" evidence="1">
    <location>
        <position position="199"/>
    </location>
    <ligand>
        <name>S-adenosyl-L-methionine</name>
        <dbReference type="ChEBI" id="CHEBI:59789"/>
    </ligand>
</feature>
<proteinExistence type="inferred from homology"/>
<evidence type="ECO:0000255" key="1">
    <source>
        <dbReference type="HAMAP-Rule" id="MF_01589"/>
    </source>
</evidence>
<protein>
    <recommendedName>
        <fullName evidence="1">Carboxy-S-adenosyl-L-methionine synthase</fullName>
        <shortName evidence="1">Cx-SAM synthase</shortName>
        <ecNumber evidence="1">2.1.3.-</ecNumber>
    </recommendedName>
</protein>